<organism>
    <name type="scientific">Mesorhizobium japonicum (strain LMG 29417 / CECT 9101 / MAFF 303099)</name>
    <name type="common">Mesorhizobium loti (strain MAFF 303099)</name>
    <dbReference type="NCBI Taxonomy" id="266835"/>
    <lineage>
        <taxon>Bacteria</taxon>
        <taxon>Pseudomonadati</taxon>
        <taxon>Pseudomonadota</taxon>
        <taxon>Alphaproteobacteria</taxon>
        <taxon>Hyphomicrobiales</taxon>
        <taxon>Phyllobacteriaceae</taxon>
        <taxon>Mesorhizobium</taxon>
    </lineage>
</organism>
<reference key="1">
    <citation type="journal article" date="2000" name="DNA Res.">
        <title>Complete genome structure of the nitrogen-fixing symbiotic bacterium Mesorhizobium loti.</title>
        <authorList>
            <person name="Kaneko T."/>
            <person name="Nakamura Y."/>
            <person name="Sato S."/>
            <person name="Asamizu E."/>
            <person name="Kato T."/>
            <person name="Sasamoto S."/>
            <person name="Watanabe A."/>
            <person name="Idesawa K."/>
            <person name="Ishikawa A."/>
            <person name="Kawashima K."/>
            <person name="Kimura T."/>
            <person name="Kishida Y."/>
            <person name="Kiyokawa C."/>
            <person name="Kohara M."/>
            <person name="Matsumoto M."/>
            <person name="Matsuno A."/>
            <person name="Mochizuki Y."/>
            <person name="Nakayama S."/>
            <person name="Nakazaki N."/>
            <person name="Shimpo S."/>
            <person name="Sugimoto M."/>
            <person name="Takeuchi C."/>
            <person name="Yamada M."/>
            <person name="Tabata S."/>
        </authorList>
    </citation>
    <scope>NUCLEOTIDE SEQUENCE [LARGE SCALE GENOMIC DNA]</scope>
    <source>
        <strain>LMG 29417 / CECT 9101 / MAFF 303099</strain>
    </source>
</reference>
<accession>Q98MZ3</accession>
<evidence type="ECO:0000255" key="1">
    <source>
        <dbReference type="HAMAP-Rule" id="MF_00318"/>
    </source>
</evidence>
<gene>
    <name evidence="1" type="primary">eno</name>
    <name type="ordered locus">mlr0378</name>
</gene>
<protein>
    <recommendedName>
        <fullName evidence="1">Enolase</fullName>
        <ecNumber evidence="1">4.2.1.11</ecNumber>
    </recommendedName>
    <alternativeName>
        <fullName evidence="1">2-phospho-D-glycerate hydro-lyase</fullName>
    </alternativeName>
    <alternativeName>
        <fullName evidence="1">2-phosphoglycerate dehydratase</fullName>
    </alternativeName>
</protein>
<name>ENO_RHILO</name>
<feature type="chain" id="PRO_0000133954" description="Enolase">
    <location>
        <begin position="1"/>
        <end position="424"/>
    </location>
</feature>
<feature type="active site" description="Proton donor" evidence="1">
    <location>
        <position position="204"/>
    </location>
</feature>
<feature type="active site" description="Proton acceptor" evidence="1">
    <location>
        <position position="336"/>
    </location>
</feature>
<feature type="binding site" evidence="1">
    <location>
        <position position="162"/>
    </location>
    <ligand>
        <name>(2R)-2-phosphoglycerate</name>
        <dbReference type="ChEBI" id="CHEBI:58289"/>
    </ligand>
</feature>
<feature type="binding site" evidence="1">
    <location>
        <position position="241"/>
    </location>
    <ligand>
        <name>Mg(2+)</name>
        <dbReference type="ChEBI" id="CHEBI:18420"/>
    </ligand>
</feature>
<feature type="binding site" evidence="1">
    <location>
        <position position="284"/>
    </location>
    <ligand>
        <name>Mg(2+)</name>
        <dbReference type="ChEBI" id="CHEBI:18420"/>
    </ligand>
</feature>
<feature type="binding site" evidence="1">
    <location>
        <position position="311"/>
    </location>
    <ligand>
        <name>Mg(2+)</name>
        <dbReference type="ChEBI" id="CHEBI:18420"/>
    </ligand>
</feature>
<feature type="binding site" evidence="1">
    <location>
        <position position="336"/>
    </location>
    <ligand>
        <name>(2R)-2-phosphoglycerate</name>
        <dbReference type="ChEBI" id="CHEBI:58289"/>
    </ligand>
</feature>
<feature type="binding site" evidence="1">
    <location>
        <position position="365"/>
    </location>
    <ligand>
        <name>(2R)-2-phosphoglycerate</name>
        <dbReference type="ChEBI" id="CHEBI:58289"/>
    </ligand>
</feature>
<feature type="binding site" evidence="1">
    <location>
        <position position="366"/>
    </location>
    <ligand>
        <name>(2R)-2-phosphoglycerate</name>
        <dbReference type="ChEBI" id="CHEBI:58289"/>
    </ligand>
</feature>
<feature type="binding site" evidence="1">
    <location>
        <position position="387"/>
    </location>
    <ligand>
        <name>(2R)-2-phosphoglycerate</name>
        <dbReference type="ChEBI" id="CHEBI:58289"/>
    </ligand>
</feature>
<comment type="function">
    <text evidence="1">Catalyzes the reversible conversion of 2-phosphoglycerate (2-PG) into phosphoenolpyruvate (PEP). It is essential for the degradation of carbohydrates via glycolysis.</text>
</comment>
<comment type="catalytic activity">
    <reaction evidence="1">
        <text>(2R)-2-phosphoglycerate = phosphoenolpyruvate + H2O</text>
        <dbReference type="Rhea" id="RHEA:10164"/>
        <dbReference type="ChEBI" id="CHEBI:15377"/>
        <dbReference type="ChEBI" id="CHEBI:58289"/>
        <dbReference type="ChEBI" id="CHEBI:58702"/>
        <dbReference type="EC" id="4.2.1.11"/>
    </reaction>
</comment>
<comment type="cofactor">
    <cofactor evidence="1">
        <name>Mg(2+)</name>
        <dbReference type="ChEBI" id="CHEBI:18420"/>
    </cofactor>
    <text evidence="1">Binds a second Mg(2+) ion via substrate during catalysis.</text>
</comment>
<comment type="pathway">
    <text evidence="1">Carbohydrate degradation; glycolysis; pyruvate from D-glyceraldehyde 3-phosphate: step 4/5.</text>
</comment>
<comment type="subcellular location">
    <subcellularLocation>
        <location evidence="1">Cytoplasm</location>
    </subcellularLocation>
    <subcellularLocation>
        <location evidence="1">Secreted</location>
    </subcellularLocation>
    <subcellularLocation>
        <location evidence="1">Cell surface</location>
    </subcellularLocation>
    <text evidence="1">Fractions of enolase are present in both the cytoplasm and on the cell surface.</text>
</comment>
<comment type="similarity">
    <text evidence="1">Belongs to the enolase family.</text>
</comment>
<dbReference type="EC" id="4.2.1.11" evidence="1"/>
<dbReference type="EMBL" id="BA000012">
    <property type="protein sequence ID" value="BAB47970.1"/>
    <property type="molecule type" value="Genomic_DNA"/>
</dbReference>
<dbReference type="RefSeq" id="WP_010909327.1">
    <property type="nucleotide sequence ID" value="NC_002678.2"/>
</dbReference>
<dbReference type="SMR" id="Q98MZ3"/>
<dbReference type="KEGG" id="mlo:mlr0378"/>
<dbReference type="PATRIC" id="fig|266835.9.peg.300"/>
<dbReference type="eggNOG" id="COG0148">
    <property type="taxonomic scope" value="Bacteria"/>
</dbReference>
<dbReference type="HOGENOM" id="CLU_031223_2_1_5"/>
<dbReference type="UniPathway" id="UPA00109">
    <property type="reaction ID" value="UER00187"/>
</dbReference>
<dbReference type="Proteomes" id="UP000000552">
    <property type="component" value="Chromosome"/>
</dbReference>
<dbReference type="GO" id="GO:0009986">
    <property type="term" value="C:cell surface"/>
    <property type="evidence" value="ECO:0007669"/>
    <property type="project" value="UniProtKB-SubCell"/>
</dbReference>
<dbReference type="GO" id="GO:0005576">
    <property type="term" value="C:extracellular region"/>
    <property type="evidence" value="ECO:0007669"/>
    <property type="project" value="UniProtKB-SubCell"/>
</dbReference>
<dbReference type="GO" id="GO:0000015">
    <property type="term" value="C:phosphopyruvate hydratase complex"/>
    <property type="evidence" value="ECO:0007669"/>
    <property type="project" value="InterPro"/>
</dbReference>
<dbReference type="GO" id="GO:0000287">
    <property type="term" value="F:magnesium ion binding"/>
    <property type="evidence" value="ECO:0007669"/>
    <property type="project" value="UniProtKB-UniRule"/>
</dbReference>
<dbReference type="GO" id="GO:0004634">
    <property type="term" value="F:phosphopyruvate hydratase activity"/>
    <property type="evidence" value="ECO:0007669"/>
    <property type="project" value="UniProtKB-UniRule"/>
</dbReference>
<dbReference type="GO" id="GO:0006096">
    <property type="term" value="P:glycolytic process"/>
    <property type="evidence" value="ECO:0007669"/>
    <property type="project" value="UniProtKB-UniRule"/>
</dbReference>
<dbReference type="CDD" id="cd03313">
    <property type="entry name" value="enolase"/>
    <property type="match status" value="1"/>
</dbReference>
<dbReference type="FunFam" id="3.20.20.120:FF:000001">
    <property type="entry name" value="Enolase"/>
    <property type="match status" value="1"/>
</dbReference>
<dbReference type="FunFam" id="3.30.390.10:FF:000001">
    <property type="entry name" value="Enolase"/>
    <property type="match status" value="1"/>
</dbReference>
<dbReference type="Gene3D" id="3.20.20.120">
    <property type="entry name" value="Enolase-like C-terminal domain"/>
    <property type="match status" value="1"/>
</dbReference>
<dbReference type="Gene3D" id="3.30.390.10">
    <property type="entry name" value="Enolase-like, N-terminal domain"/>
    <property type="match status" value="1"/>
</dbReference>
<dbReference type="HAMAP" id="MF_00318">
    <property type="entry name" value="Enolase"/>
    <property type="match status" value="1"/>
</dbReference>
<dbReference type="InterPro" id="IPR000941">
    <property type="entry name" value="Enolase"/>
</dbReference>
<dbReference type="InterPro" id="IPR036849">
    <property type="entry name" value="Enolase-like_C_sf"/>
</dbReference>
<dbReference type="InterPro" id="IPR029017">
    <property type="entry name" value="Enolase-like_N"/>
</dbReference>
<dbReference type="InterPro" id="IPR020810">
    <property type="entry name" value="Enolase_C"/>
</dbReference>
<dbReference type="InterPro" id="IPR020809">
    <property type="entry name" value="Enolase_CS"/>
</dbReference>
<dbReference type="InterPro" id="IPR020811">
    <property type="entry name" value="Enolase_N"/>
</dbReference>
<dbReference type="NCBIfam" id="TIGR01060">
    <property type="entry name" value="eno"/>
    <property type="match status" value="1"/>
</dbReference>
<dbReference type="PANTHER" id="PTHR11902">
    <property type="entry name" value="ENOLASE"/>
    <property type="match status" value="1"/>
</dbReference>
<dbReference type="PANTHER" id="PTHR11902:SF1">
    <property type="entry name" value="ENOLASE"/>
    <property type="match status" value="1"/>
</dbReference>
<dbReference type="Pfam" id="PF00113">
    <property type="entry name" value="Enolase_C"/>
    <property type="match status" value="1"/>
</dbReference>
<dbReference type="Pfam" id="PF03952">
    <property type="entry name" value="Enolase_N"/>
    <property type="match status" value="1"/>
</dbReference>
<dbReference type="PIRSF" id="PIRSF001400">
    <property type="entry name" value="Enolase"/>
    <property type="match status" value="1"/>
</dbReference>
<dbReference type="PRINTS" id="PR00148">
    <property type="entry name" value="ENOLASE"/>
</dbReference>
<dbReference type="SFLD" id="SFLDS00001">
    <property type="entry name" value="Enolase"/>
    <property type="match status" value="1"/>
</dbReference>
<dbReference type="SFLD" id="SFLDF00002">
    <property type="entry name" value="enolase"/>
    <property type="match status" value="1"/>
</dbReference>
<dbReference type="SMART" id="SM01192">
    <property type="entry name" value="Enolase_C"/>
    <property type="match status" value="1"/>
</dbReference>
<dbReference type="SMART" id="SM01193">
    <property type="entry name" value="Enolase_N"/>
    <property type="match status" value="1"/>
</dbReference>
<dbReference type="SUPFAM" id="SSF51604">
    <property type="entry name" value="Enolase C-terminal domain-like"/>
    <property type="match status" value="1"/>
</dbReference>
<dbReference type="SUPFAM" id="SSF54826">
    <property type="entry name" value="Enolase N-terminal domain-like"/>
    <property type="match status" value="1"/>
</dbReference>
<dbReference type="PROSITE" id="PS00164">
    <property type="entry name" value="ENOLASE"/>
    <property type="match status" value="1"/>
</dbReference>
<sequence>MTAIIDIVGREILDSRGNPTVEVDVVLEDGSMGRAAVPSGASTGAHEAVELRDGGARYLGKGVLKAVEAVNGELFEAIGGMEAENQIHIDQTMIELDGTPNKSRLGANAILGVSLAVAKAAADAAGLPLYRYVGGTKAHILPVPMMNIINGGAHADNPIDFQEFMILPVGAPTLREGVRWGSEIFHTLRKKLKDAGHNTNVGDEGGFAPNLKSAPVALDFIMESIEKAGFKPGEEIALGLDCAATEFFKDGNYVYEGEKKTRDPKAQAKYLAKLAADYPIVSIEDGLAEDDWEGWKYLTDLIGKKTQLVGDDLFVTNTARLRDGIRMGVANSILVKVNQIGSLTETLDAVETAHKAGYTAVMSHRSGETEDSTIADLAVATNCGQIKTGSLSRSDRMAKYNQLIRIEEELGKQARYAGKSVIKG</sequence>
<keyword id="KW-0963">Cytoplasm</keyword>
<keyword id="KW-0324">Glycolysis</keyword>
<keyword id="KW-0456">Lyase</keyword>
<keyword id="KW-0460">Magnesium</keyword>
<keyword id="KW-0479">Metal-binding</keyword>
<keyword id="KW-0964">Secreted</keyword>
<proteinExistence type="inferred from homology"/>